<sequence length="357" mass="40005">MNESYRCQTSTWVERGSSATMGAVLFGAGLLGNLLALVLLARSGLGSCRPGPLHPPPSVFYVLVCGLTVTDLLGKCLISPMVLAAYAQNQSLKELLPASGNQLCETFAFLMSFFGLASTLQLLAMAVECWLSLGHPFFYQRHVTLRRGVLVAPVVAAFCLAFCALPFAGFGKFVQYCPGTWCFIQMIHKERSFSVIGFSVLYSSLMALLVLATVVCNLGAMYNLYDMHRRQRHYPHRCSRDRAQSGSDYRHGSLHPLEELDHFVLLALMTVLFTMCSLPLIYRAYYGAFKLENKAEGDSEDLQALRFLSVISIVDPWIFIIFRTSVFRMLFHKVFTRPLIYRNWSSHSQQSNVESTL</sequence>
<name>PD2R_MOUSE</name>
<accession>P70263</accession>
<accession>A2RSY4</accession>
<accession>Q8CCM3</accession>
<gene>
    <name type="primary">Ptgdr</name>
</gene>
<protein>
    <recommendedName>
        <fullName>Prostaglandin D2 receptor</fullName>
        <shortName>PGD receptor</shortName>
        <shortName>PGD2 receptor</shortName>
    </recommendedName>
    <alternativeName>
        <fullName>Prostanoid DP receptor</fullName>
    </alternativeName>
</protein>
<evidence type="ECO:0000250" key="1">
    <source>
        <dbReference type="UniProtKB" id="Q9R261"/>
    </source>
</evidence>
<evidence type="ECO:0000255" key="2"/>
<evidence type="ECO:0000255" key="3">
    <source>
        <dbReference type="PROSITE-ProRule" id="PRU00521"/>
    </source>
</evidence>
<evidence type="ECO:0000269" key="4">
    <source>
    </source>
</evidence>
<evidence type="ECO:0000305" key="5"/>
<keyword id="KW-1003">Cell membrane</keyword>
<keyword id="KW-1015">Disulfide bond</keyword>
<keyword id="KW-0297">G-protein coupled receptor</keyword>
<keyword id="KW-0325">Glycoprotein</keyword>
<keyword id="KW-0467">Mast cell degranulation</keyword>
<keyword id="KW-0472">Membrane</keyword>
<keyword id="KW-0675">Receptor</keyword>
<keyword id="KW-1185">Reference proteome</keyword>
<keyword id="KW-0807">Transducer</keyword>
<keyword id="KW-0812">Transmembrane</keyword>
<keyword id="KW-1133">Transmembrane helix</keyword>
<reference key="1">
    <citation type="journal article" date="2005" name="Science">
        <title>The transcriptional landscape of the mammalian genome.</title>
        <authorList>
            <person name="Carninci P."/>
            <person name="Kasukawa T."/>
            <person name="Katayama S."/>
            <person name="Gough J."/>
            <person name="Frith M.C."/>
            <person name="Maeda N."/>
            <person name="Oyama R."/>
            <person name="Ravasi T."/>
            <person name="Lenhard B."/>
            <person name="Wells C."/>
            <person name="Kodzius R."/>
            <person name="Shimokawa K."/>
            <person name="Bajic V.B."/>
            <person name="Brenner S.E."/>
            <person name="Batalov S."/>
            <person name="Forrest A.R."/>
            <person name="Zavolan M."/>
            <person name="Davis M.J."/>
            <person name="Wilming L.G."/>
            <person name="Aidinis V."/>
            <person name="Allen J.E."/>
            <person name="Ambesi-Impiombato A."/>
            <person name="Apweiler R."/>
            <person name="Aturaliya R.N."/>
            <person name="Bailey T.L."/>
            <person name="Bansal M."/>
            <person name="Baxter L."/>
            <person name="Beisel K.W."/>
            <person name="Bersano T."/>
            <person name="Bono H."/>
            <person name="Chalk A.M."/>
            <person name="Chiu K.P."/>
            <person name="Choudhary V."/>
            <person name="Christoffels A."/>
            <person name="Clutterbuck D.R."/>
            <person name="Crowe M.L."/>
            <person name="Dalla E."/>
            <person name="Dalrymple B.P."/>
            <person name="de Bono B."/>
            <person name="Della Gatta G."/>
            <person name="di Bernardo D."/>
            <person name="Down T."/>
            <person name="Engstrom P."/>
            <person name="Fagiolini M."/>
            <person name="Faulkner G."/>
            <person name="Fletcher C.F."/>
            <person name="Fukushima T."/>
            <person name="Furuno M."/>
            <person name="Futaki S."/>
            <person name="Gariboldi M."/>
            <person name="Georgii-Hemming P."/>
            <person name="Gingeras T.R."/>
            <person name="Gojobori T."/>
            <person name="Green R.E."/>
            <person name="Gustincich S."/>
            <person name="Harbers M."/>
            <person name="Hayashi Y."/>
            <person name="Hensch T.K."/>
            <person name="Hirokawa N."/>
            <person name="Hill D."/>
            <person name="Huminiecki L."/>
            <person name="Iacono M."/>
            <person name="Ikeo K."/>
            <person name="Iwama A."/>
            <person name="Ishikawa T."/>
            <person name="Jakt M."/>
            <person name="Kanapin A."/>
            <person name="Katoh M."/>
            <person name="Kawasawa Y."/>
            <person name="Kelso J."/>
            <person name="Kitamura H."/>
            <person name="Kitano H."/>
            <person name="Kollias G."/>
            <person name="Krishnan S.P."/>
            <person name="Kruger A."/>
            <person name="Kummerfeld S.K."/>
            <person name="Kurochkin I.V."/>
            <person name="Lareau L.F."/>
            <person name="Lazarevic D."/>
            <person name="Lipovich L."/>
            <person name="Liu J."/>
            <person name="Liuni S."/>
            <person name="McWilliam S."/>
            <person name="Madan Babu M."/>
            <person name="Madera M."/>
            <person name="Marchionni L."/>
            <person name="Matsuda H."/>
            <person name="Matsuzawa S."/>
            <person name="Miki H."/>
            <person name="Mignone F."/>
            <person name="Miyake S."/>
            <person name="Morris K."/>
            <person name="Mottagui-Tabar S."/>
            <person name="Mulder N."/>
            <person name="Nakano N."/>
            <person name="Nakauchi H."/>
            <person name="Ng P."/>
            <person name="Nilsson R."/>
            <person name="Nishiguchi S."/>
            <person name="Nishikawa S."/>
            <person name="Nori F."/>
            <person name="Ohara O."/>
            <person name="Okazaki Y."/>
            <person name="Orlando V."/>
            <person name="Pang K.C."/>
            <person name="Pavan W.J."/>
            <person name="Pavesi G."/>
            <person name="Pesole G."/>
            <person name="Petrovsky N."/>
            <person name="Piazza S."/>
            <person name="Reed J."/>
            <person name="Reid J.F."/>
            <person name="Ring B.Z."/>
            <person name="Ringwald M."/>
            <person name="Rost B."/>
            <person name="Ruan Y."/>
            <person name="Salzberg S.L."/>
            <person name="Sandelin A."/>
            <person name="Schneider C."/>
            <person name="Schoenbach C."/>
            <person name="Sekiguchi K."/>
            <person name="Semple C.A."/>
            <person name="Seno S."/>
            <person name="Sessa L."/>
            <person name="Sheng Y."/>
            <person name="Shibata Y."/>
            <person name="Shimada H."/>
            <person name="Shimada K."/>
            <person name="Silva D."/>
            <person name="Sinclair B."/>
            <person name="Sperling S."/>
            <person name="Stupka E."/>
            <person name="Sugiura K."/>
            <person name="Sultana R."/>
            <person name="Takenaka Y."/>
            <person name="Taki K."/>
            <person name="Tammoja K."/>
            <person name="Tan S.L."/>
            <person name="Tang S."/>
            <person name="Taylor M.S."/>
            <person name="Tegner J."/>
            <person name="Teichmann S.A."/>
            <person name="Ueda H.R."/>
            <person name="van Nimwegen E."/>
            <person name="Verardo R."/>
            <person name="Wei C.L."/>
            <person name="Yagi K."/>
            <person name="Yamanishi H."/>
            <person name="Zabarovsky E."/>
            <person name="Zhu S."/>
            <person name="Zimmer A."/>
            <person name="Hide W."/>
            <person name="Bult C."/>
            <person name="Grimmond S.M."/>
            <person name="Teasdale R.D."/>
            <person name="Liu E.T."/>
            <person name="Brusic V."/>
            <person name="Quackenbush J."/>
            <person name="Wahlestedt C."/>
            <person name="Mattick J.S."/>
            <person name="Hume D.A."/>
            <person name="Kai C."/>
            <person name="Sasaki D."/>
            <person name="Tomaru Y."/>
            <person name="Fukuda S."/>
            <person name="Kanamori-Katayama M."/>
            <person name="Suzuki M."/>
            <person name="Aoki J."/>
            <person name="Arakawa T."/>
            <person name="Iida J."/>
            <person name="Imamura K."/>
            <person name="Itoh M."/>
            <person name="Kato T."/>
            <person name="Kawaji H."/>
            <person name="Kawagashira N."/>
            <person name="Kawashima T."/>
            <person name="Kojima M."/>
            <person name="Kondo S."/>
            <person name="Konno H."/>
            <person name="Nakano K."/>
            <person name="Ninomiya N."/>
            <person name="Nishio T."/>
            <person name="Okada M."/>
            <person name="Plessy C."/>
            <person name="Shibata K."/>
            <person name="Shiraki T."/>
            <person name="Suzuki S."/>
            <person name="Tagami M."/>
            <person name="Waki K."/>
            <person name="Watahiki A."/>
            <person name="Okamura-Oho Y."/>
            <person name="Suzuki H."/>
            <person name="Kawai J."/>
            <person name="Hayashizaki Y."/>
        </authorList>
    </citation>
    <scope>NUCLEOTIDE SEQUENCE [LARGE SCALE MRNA]</scope>
    <source>
        <strain>C57BL/6J</strain>
        <tissue>Olfactory bulb</tissue>
    </source>
</reference>
<reference key="2">
    <citation type="journal article" date="1994" name="Proc. Natl. Acad. Sci. U.S.A.">
        <title>Molecular characterization of a mouse prostaglandin D receptor and functional expression of the cloned gene.</title>
        <authorList>
            <person name="Hirata M."/>
            <person name="Kakizuka A."/>
            <person name="Aizawa M."/>
            <person name="Ushikubi F."/>
            <person name="Narumiya S."/>
        </authorList>
    </citation>
    <scope>NUCLEOTIDE SEQUENCE [GENOMIC DNA]</scope>
    <source>
        <strain>129/Sv</strain>
        <tissue>Lung</tissue>
    </source>
</reference>
<reference key="3">
    <citation type="journal article" date="2004" name="Genome Res.">
        <title>The status, quality, and expansion of the NIH full-length cDNA project: the Mammalian Gene Collection (MGC).</title>
        <authorList>
            <consortium name="The MGC Project Team"/>
        </authorList>
    </citation>
    <scope>NUCLEOTIDE SEQUENCE [LARGE SCALE MRNA]</scope>
    <source>
        <tissue>Brain</tissue>
    </source>
</reference>
<reference key="4">
    <citation type="journal article" date="2013" name="Nat. Immunol.">
        <title>Mast cell maturation is driven via a group III phospholipase A2-prostaglandin D2-DP1 receptor paracrine axis.</title>
        <authorList>
            <person name="Taketomi Y."/>
            <person name="Ueno N."/>
            <person name="Kojima T."/>
            <person name="Sato H."/>
            <person name="Murase R."/>
            <person name="Yamamoto K."/>
            <person name="Tanaka S."/>
            <person name="Sakanaka M."/>
            <person name="Nakamura M."/>
            <person name="Nishito Y."/>
            <person name="Kawana M."/>
            <person name="Kambe N."/>
            <person name="Ikeda K."/>
            <person name="Taguchi R."/>
            <person name="Nakamizo S."/>
            <person name="Kabashima K."/>
            <person name="Gelb M.H."/>
            <person name="Arita M."/>
            <person name="Yokomizo T."/>
            <person name="Nakamura M."/>
            <person name="Watanabe K."/>
            <person name="Hirai H."/>
            <person name="Nakamura M."/>
            <person name="Okayama Y."/>
            <person name="Ra C."/>
            <person name="Aritake K."/>
            <person name="Urade Y."/>
            <person name="Morimoto K."/>
            <person name="Sugimoto Y."/>
            <person name="Shimizu T."/>
            <person name="Narumiya S."/>
            <person name="Hara S."/>
            <person name="Murakami M."/>
        </authorList>
    </citation>
    <scope>FUNCTION</scope>
    <scope>DISRUPTION PHENOTYPE</scope>
</reference>
<feature type="chain" id="PRO_0000070048" description="Prostaglandin D2 receptor">
    <location>
        <begin position="1"/>
        <end position="357"/>
    </location>
</feature>
<feature type="topological domain" description="Extracellular" evidence="2">
    <location>
        <begin position="1"/>
        <end position="20"/>
    </location>
</feature>
<feature type="transmembrane region" description="Helical; Name=1" evidence="2">
    <location>
        <begin position="21"/>
        <end position="41"/>
    </location>
</feature>
<feature type="topological domain" description="Cytoplasmic" evidence="2">
    <location>
        <begin position="42"/>
        <end position="58"/>
    </location>
</feature>
<feature type="transmembrane region" description="Helical; Name=2" evidence="2">
    <location>
        <begin position="59"/>
        <end position="79"/>
    </location>
</feature>
<feature type="topological domain" description="Extracellular" evidence="2">
    <location>
        <begin position="80"/>
        <end position="106"/>
    </location>
</feature>
<feature type="transmembrane region" description="Helical; Name=3" evidence="2">
    <location>
        <begin position="107"/>
        <end position="127"/>
    </location>
</feature>
<feature type="topological domain" description="Cytoplasmic" evidence="2">
    <location>
        <begin position="128"/>
        <end position="149"/>
    </location>
</feature>
<feature type="transmembrane region" description="Helical; Name=4" evidence="2">
    <location>
        <begin position="150"/>
        <end position="170"/>
    </location>
</feature>
<feature type="topological domain" description="Extracellular" evidence="2">
    <location>
        <begin position="171"/>
        <end position="194"/>
    </location>
</feature>
<feature type="transmembrane region" description="Helical; Name=5" evidence="2">
    <location>
        <begin position="195"/>
        <end position="215"/>
    </location>
</feature>
<feature type="topological domain" description="Cytoplasmic" evidence="2">
    <location>
        <begin position="216"/>
        <end position="261"/>
    </location>
</feature>
<feature type="transmembrane region" description="Helical; Name=6" evidence="2">
    <location>
        <begin position="262"/>
        <end position="282"/>
    </location>
</feature>
<feature type="topological domain" description="Extracellular" evidence="2">
    <location>
        <begin position="283"/>
        <end position="306"/>
    </location>
</feature>
<feature type="transmembrane region" description="Helical; Name=7" evidence="2">
    <location>
        <begin position="307"/>
        <end position="327"/>
    </location>
</feature>
<feature type="topological domain" description="Cytoplasmic" evidence="2">
    <location>
        <begin position="328"/>
        <end position="357"/>
    </location>
</feature>
<feature type="glycosylation site" description="N-linked (GlcNAc...) asparagine" evidence="2">
    <location>
        <position position="2"/>
    </location>
</feature>
<feature type="glycosylation site" description="N-linked (GlcNAc...) asparagine" evidence="2">
    <location>
        <position position="89"/>
    </location>
</feature>
<feature type="disulfide bond" evidence="3">
    <location>
        <begin position="104"/>
        <end position="182"/>
    </location>
</feature>
<feature type="sequence conflict" description="In Ref. 1; BAC27895." evidence="5" ref="1">
    <original>K</original>
    <variation>N</variation>
    <location>
        <position position="75"/>
    </location>
</feature>
<organism>
    <name type="scientific">Mus musculus</name>
    <name type="common">Mouse</name>
    <dbReference type="NCBI Taxonomy" id="10090"/>
    <lineage>
        <taxon>Eukaryota</taxon>
        <taxon>Metazoa</taxon>
        <taxon>Chordata</taxon>
        <taxon>Craniata</taxon>
        <taxon>Vertebrata</taxon>
        <taxon>Euteleostomi</taxon>
        <taxon>Mammalia</taxon>
        <taxon>Eutheria</taxon>
        <taxon>Euarchontoglires</taxon>
        <taxon>Glires</taxon>
        <taxon>Rodentia</taxon>
        <taxon>Myomorpha</taxon>
        <taxon>Muroidea</taxon>
        <taxon>Muridae</taxon>
        <taxon>Murinae</taxon>
        <taxon>Mus</taxon>
        <taxon>Mus</taxon>
    </lineage>
</organism>
<comment type="function">
    <text evidence="1 4">Receptor for prostaglandin D2 (PGD2). The activity of this receptor is mainly mediated by G(s) proteins that stimulate adenylate cyclase, resulting in an elevation of intracellular cAMP. A mobilization of calcium is also observed, but without formation of inositol 1,4,5-trisphosphate (By similarity). Involved in PLA2G3-dependent maturation of mast cells. PLA2G3 is secreted by immature mast cells and acts on nearby fibroblasts upstream to PTDGS to synthesize PGD2, which in turn promotes mast cell maturation and degranulation via PTGDR (PubMed:23624557).</text>
</comment>
<comment type="subcellular location">
    <subcellularLocation>
        <location evidence="5">Cell membrane</location>
        <topology evidence="5">Multi-pass membrane protein</topology>
    </subcellularLocation>
</comment>
<comment type="tissue specificity">
    <text>Most abundantly expressed in the ileum, followed by lung, stomach and uterus.</text>
</comment>
<comment type="disruption phenotype">
    <text evidence="4">Mutant mice show decreased susceptibility to passive cutaneous anaphylaxis associated with decreased mast cell degranulation.</text>
</comment>
<comment type="similarity">
    <text evidence="3">Belongs to the G-protein coupled receptor 1 family.</text>
</comment>
<proteinExistence type="evidence at transcript level"/>
<dbReference type="EMBL" id="AK032488">
    <property type="protein sequence ID" value="BAC27895.1"/>
    <property type="molecule type" value="mRNA"/>
</dbReference>
<dbReference type="EMBL" id="D29765">
    <property type="protein sequence ID" value="BAA06168.1"/>
    <property type="molecule type" value="Genomic_DNA"/>
</dbReference>
<dbReference type="EMBL" id="BC132297">
    <property type="protein sequence ID" value="AAI32298.1"/>
    <property type="molecule type" value="mRNA"/>
</dbReference>
<dbReference type="CCDS" id="CCDS26971.1"/>
<dbReference type="PIR" id="I59269">
    <property type="entry name" value="I59269"/>
</dbReference>
<dbReference type="PIR" id="I80042">
    <property type="entry name" value="I80042"/>
</dbReference>
<dbReference type="RefSeq" id="NP_032988.3">
    <property type="nucleotide sequence ID" value="NM_008962.4"/>
</dbReference>
<dbReference type="SMR" id="P70263"/>
<dbReference type="FunCoup" id="P70263">
    <property type="interactions" value="976"/>
</dbReference>
<dbReference type="IntAct" id="P70263">
    <property type="interactions" value="1"/>
</dbReference>
<dbReference type="STRING" id="10090.ENSMUSP00000093653"/>
<dbReference type="BindingDB" id="P70263"/>
<dbReference type="ChEMBL" id="CHEMBL3933"/>
<dbReference type="GuidetoPHARMACOLOGY" id="338"/>
<dbReference type="GlyCosmos" id="P70263">
    <property type="glycosylation" value="2 sites, No reported glycans"/>
</dbReference>
<dbReference type="GlyGen" id="P70263">
    <property type="glycosylation" value="2 sites"/>
</dbReference>
<dbReference type="PhosphoSitePlus" id="P70263"/>
<dbReference type="PaxDb" id="10090-ENSMUSP00000093653"/>
<dbReference type="ProteomicsDB" id="287897"/>
<dbReference type="Antibodypedia" id="10764">
    <property type="antibodies" value="220 antibodies from 30 providers"/>
</dbReference>
<dbReference type="DNASU" id="19214"/>
<dbReference type="Ensembl" id="ENSMUST00000095959.2">
    <property type="protein sequence ID" value="ENSMUSP00000093653.2"/>
    <property type="gene ID" value="ENSMUSG00000071489.2"/>
</dbReference>
<dbReference type="GeneID" id="19214"/>
<dbReference type="KEGG" id="mmu:19214"/>
<dbReference type="UCSC" id="uc007ter.1">
    <property type="organism name" value="mouse"/>
</dbReference>
<dbReference type="AGR" id="MGI:102966"/>
<dbReference type="CTD" id="5729"/>
<dbReference type="MGI" id="MGI:102966">
    <property type="gene designation" value="Ptgdr"/>
</dbReference>
<dbReference type="VEuPathDB" id="HostDB:ENSMUSG00000071489"/>
<dbReference type="eggNOG" id="KOG3656">
    <property type="taxonomic scope" value="Eukaryota"/>
</dbReference>
<dbReference type="GeneTree" id="ENSGT01050000244902"/>
<dbReference type="HOGENOM" id="CLU_045991_0_2_1"/>
<dbReference type="InParanoid" id="P70263"/>
<dbReference type="OMA" id="NWHSNSC"/>
<dbReference type="OrthoDB" id="5959154at2759"/>
<dbReference type="PhylomeDB" id="P70263"/>
<dbReference type="TreeFam" id="TF324982"/>
<dbReference type="Reactome" id="R-MMU-391908">
    <property type="pathway name" value="Prostanoid ligand receptors"/>
</dbReference>
<dbReference type="Reactome" id="R-MMU-418555">
    <property type="pathway name" value="G alpha (s) signalling events"/>
</dbReference>
<dbReference type="BioGRID-ORCS" id="19214">
    <property type="hits" value="2 hits in 76 CRISPR screens"/>
</dbReference>
<dbReference type="PRO" id="PR:P70263"/>
<dbReference type="Proteomes" id="UP000000589">
    <property type="component" value="Chromosome 14"/>
</dbReference>
<dbReference type="RNAct" id="P70263">
    <property type="molecule type" value="protein"/>
</dbReference>
<dbReference type="Bgee" id="ENSMUSG00000071489">
    <property type="expression patterns" value="Expressed in lumbar dorsal root ganglion and 35 other cell types or tissues"/>
</dbReference>
<dbReference type="GO" id="GO:0005886">
    <property type="term" value="C:plasma membrane"/>
    <property type="evidence" value="ECO:0000314"/>
    <property type="project" value="MGI"/>
</dbReference>
<dbReference type="GO" id="GO:0004956">
    <property type="term" value="F:prostaglandin D receptor activity"/>
    <property type="evidence" value="ECO:0000314"/>
    <property type="project" value="MGI"/>
</dbReference>
<dbReference type="GO" id="GO:0001785">
    <property type="term" value="F:prostaglandin J receptor activity"/>
    <property type="evidence" value="ECO:0000314"/>
    <property type="project" value="MGI"/>
</dbReference>
<dbReference type="GO" id="GO:0046085">
    <property type="term" value="P:adenosine metabolic process"/>
    <property type="evidence" value="ECO:0000315"/>
    <property type="project" value="MGI"/>
</dbReference>
<dbReference type="GO" id="GO:0071799">
    <property type="term" value="P:cellular response to prostaglandin D stimulus"/>
    <property type="evidence" value="ECO:0000315"/>
    <property type="project" value="MGI"/>
</dbReference>
<dbReference type="GO" id="GO:0006954">
    <property type="term" value="P:inflammatory response"/>
    <property type="evidence" value="ECO:0000315"/>
    <property type="project" value="MGI"/>
</dbReference>
<dbReference type="GO" id="GO:0030238">
    <property type="term" value="P:male sex determination"/>
    <property type="evidence" value="ECO:0000315"/>
    <property type="project" value="MGI"/>
</dbReference>
<dbReference type="GO" id="GO:0043303">
    <property type="term" value="P:mast cell degranulation"/>
    <property type="evidence" value="ECO:0007669"/>
    <property type="project" value="UniProtKB-KW"/>
</dbReference>
<dbReference type="GO" id="GO:0030431">
    <property type="term" value="P:sleep"/>
    <property type="evidence" value="ECO:0000315"/>
    <property type="project" value="MGI"/>
</dbReference>
<dbReference type="FunFam" id="1.20.1070.10:FF:000175">
    <property type="entry name" value="Prostaglandin D2 receptor"/>
    <property type="match status" value="1"/>
</dbReference>
<dbReference type="Gene3D" id="1.20.1070.10">
    <property type="entry name" value="Rhodopsin 7-helix transmembrane proteins"/>
    <property type="match status" value="1"/>
</dbReference>
<dbReference type="InterPro" id="IPR000276">
    <property type="entry name" value="GPCR_Rhodpsn"/>
</dbReference>
<dbReference type="InterPro" id="IPR017452">
    <property type="entry name" value="GPCR_Rhodpsn_7TM"/>
</dbReference>
<dbReference type="InterPro" id="IPR000376">
    <property type="entry name" value="Pglndn_D_rcpt"/>
</dbReference>
<dbReference type="InterPro" id="IPR008365">
    <property type="entry name" value="Prostanoid_rcpt"/>
</dbReference>
<dbReference type="PANTHER" id="PTHR11866">
    <property type="entry name" value="G-PROTEIN COUPLED RECEPTOR FAMILY 1 MEMBER"/>
    <property type="match status" value="1"/>
</dbReference>
<dbReference type="PANTHER" id="PTHR11866:SF14">
    <property type="entry name" value="PROSTAGLANDIN D2 RECEPTOR"/>
    <property type="match status" value="1"/>
</dbReference>
<dbReference type="Pfam" id="PF00001">
    <property type="entry name" value="7tm_1"/>
    <property type="match status" value="1"/>
</dbReference>
<dbReference type="PRINTS" id="PR01788">
    <property type="entry name" value="PROSTANOIDR"/>
</dbReference>
<dbReference type="PRINTS" id="PR00854">
    <property type="entry name" value="PRSTNOIDDPR"/>
</dbReference>
<dbReference type="SUPFAM" id="SSF81321">
    <property type="entry name" value="Family A G protein-coupled receptor-like"/>
    <property type="match status" value="1"/>
</dbReference>
<dbReference type="PROSITE" id="PS50262">
    <property type="entry name" value="G_PROTEIN_RECEP_F1_2"/>
    <property type="match status" value="1"/>
</dbReference>